<accession>B9DNW3</accession>
<dbReference type="EC" id="3.1.21.10" evidence="1"/>
<dbReference type="EMBL" id="AM295250">
    <property type="protein sequence ID" value="CAL27991.1"/>
    <property type="molecule type" value="Genomic_DNA"/>
</dbReference>
<dbReference type="RefSeq" id="WP_015900332.1">
    <property type="nucleotide sequence ID" value="NC_012121.1"/>
</dbReference>
<dbReference type="SMR" id="B9DNW3"/>
<dbReference type="GeneID" id="93793509"/>
<dbReference type="KEGG" id="sca:SCA_1083"/>
<dbReference type="eggNOG" id="COG3331">
    <property type="taxonomic scope" value="Bacteria"/>
</dbReference>
<dbReference type="HOGENOM" id="CLU_096340_0_0_9"/>
<dbReference type="OrthoDB" id="9783592at2"/>
<dbReference type="BioCyc" id="SCAR396513:SCA_RS05425-MONOMER"/>
<dbReference type="Proteomes" id="UP000000444">
    <property type="component" value="Chromosome"/>
</dbReference>
<dbReference type="GO" id="GO:0005737">
    <property type="term" value="C:cytoplasm"/>
    <property type="evidence" value="ECO:0007669"/>
    <property type="project" value="UniProtKB-SubCell"/>
</dbReference>
<dbReference type="GO" id="GO:0004519">
    <property type="term" value="F:endonuclease activity"/>
    <property type="evidence" value="ECO:0007669"/>
    <property type="project" value="UniProtKB-UniRule"/>
</dbReference>
<dbReference type="GO" id="GO:0000287">
    <property type="term" value="F:magnesium ion binding"/>
    <property type="evidence" value="ECO:0007669"/>
    <property type="project" value="UniProtKB-UniRule"/>
</dbReference>
<dbReference type="GO" id="GO:0003676">
    <property type="term" value="F:nucleic acid binding"/>
    <property type="evidence" value="ECO:0007669"/>
    <property type="project" value="InterPro"/>
</dbReference>
<dbReference type="GO" id="GO:0007059">
    <property type="term" value="P:chromosome segregation"/>
    <property type="evidence" value="ECO:0007669"/>
    <property type="project" value="UniProtKB-UniRule"/>
</dbReference>
<dbReference type="GO" id="GO:0006310">
    <property type="term" value="P:DNA recombination"/>
    <property type="evidence" value="ECO:0007669"/>
    <property type="project" value="UniProtKB-UniRule"/>
</dbReference>
<dbReference type="GO" id="GO:0006281">
    <property type="term" value="P:DNA repair"/>
    <property type="evidence" value="ECO:0007669"/>
    <property type="project" value="UniProtKB-UniRule"/>
</dbReference>
<dbReference type="CDD" id="cd22354">
    <property type="entry name" value="RecU-like"/>
    <property type="match status" value="1"/>
</dbReference>
<dbReference type="Gene3D" id="3.40.1350.10">
    <property type="match status" value="1"/>
</dbReference>
<dbReference type="HAMAP" id="MF_00130">
    <property type="entry name" value="RecU"/>
    <property type="match status" value="1"/>
</dbReference>
<dbReference type="InterPro" id="IPR004612">
    <property type="entry name" value="Resolv_RecU"/>
</dbReference>
<dbReference type="InterPro" id="IPR011335">
    <property type="entry name" value="Restrct_endonuc-II-like"/>
</dbReference>
<dbReference type="InterPro" id="IPR011856">
    <property type="entry name" value="tRNA_endonuc-like_dom_sf"/>
</dbReference>
<dbReference type="NCBIfam" id="NF002581">
    <property type="entry name" value="PRK02234.1-2"/>
    <property type="match status" value="1"/>
</dbReference>
<dbReference type="NCBIfam" id="NF002583">
    <property type="entry name" value="PRK02234.1-4"/>
    <property type="match status" value="1"/>
</dbReference>
<dbReference type="NCBIfam" id="NF002584">
    <property type="entry name" value="PRK02234.1-5"/>
    <property type="match status" value="1"/>
</dbReference>
<dbReference type="NCBIfam" id="TIGR00648">
    <property type="entry name" value="recU"/>
    <property type="match status" value="1"/>
</dbReference>
<dbReference type="Pfam" id="PF03838">
    <property type="entry name" value="RecU"/>
    <property type="match status" value="1"/>
</dbReference>
<dbReference type="PIRSF" id="PIRSF037785">
    <property type="entry name" value="RecU"/>
    <property type="match status" value="1"/>
</dbReference>
<dbReference type="SUPFAM" id="SSF52980">
    <property type="entry name" value="Restriction endonuclease-like"/>
    <property type="match status" value="1"/>
</dbReference>
<protein>
    <recommendedName>
        <fullName evidence="1">Holliday junction resolvase RecU</fullName>
        <ecNumber evidence="1">3.1.21.10</ecNumber>
    </recommendedName>
    <alternativeName>
        <fullName evidence="1">Recombination protein U homolog</fullName>
    </alternativeName>
</protein>
<comment type="function">
    <text evidence="1">Endonuclease that resolves Holliday junction intermediates in genetic recombination. Cleaves mobile four-strand junctions by introducing symmetrical nicks in paired strands. Promotes annealing of linear ssDNA with homologous dsDNA. Required for DNA repair, homologous recombination and chromosome segregation.</text>
</comment>
<comment type="catalytic activity">
    <reaction evidence="1">
        <text>Endonucleolytic cleavage at a junction such as a reciprocal single-stranded crossover between two homologous DNA duplexes (Holliday junction).</text>
        <dbReference type="EC" id="3.1.21.10"/>
    </reaction>
</comment>
<comment type="cofactor">
    <cofactor evidence="1">
        <name>Mg(2+)</name>
        <dbReference type="ChEBI" id="CHEBI:18420"/>
    </cofactor>
    <text evidence="1">Binds 1 Mg(2+) ion per subunit.</text>
</comment>
<comment type="subcellular location">
    <subcellularLocation>
        <location evidence="1">Cytoplasm</location>
    </subcellularLocation>
</comment>
<comment type="similarity">
    <text evidence="1">Belongs to the RecU family.</text>
</comment>
<proteinExistence type="inferred from homology"/>
<reference key="1">
    <citation type="journal article" date="2009" name="Appl. Environ. Microbiol.">
        <title>Genome analysis of the meat starter culture bacterium Staphylococcus carnosus TM300.</title>
        <authorList>
            <person name="Rosenstein R."/>
            <person name="Nerz C."/>
            <person name="Biswas L."/>
            <person name="Resch A."/>
            <person name="Raddatz G."/>
            <person name="Schuster S.C."/>
            <person name="Goetz F."/>
        </authorList>
    </citation>
    <scope>NUCLEOTIDE SEQUENCE [LARGE SCALE GENOMIC DNA]</scope>
    <source>
        <strain>TM300</strain>
    </source>
</reference>
<sequence>MNYPNGKPFNRNKTKVGRTNDHKSSKIKYGGRGMTLEKEIELSNDYYLSIGKAVIHKKPTPVQIVDVSYPKRSKAVIKEAYFRTPSTTDYNGIYNGYYIDFEAKETKNKTSFPLQNIHEHQVMHMKAVHEQKGIAFLLIRFKTLDEVYLLPYVPFEYFWKRYQQEIKKSITVEEIRKNGYHIPYQYQPRLNYLKAVNKLILDESEDRV</sequence>
<gene>
    <name evidence="1" type="primary">recU</name>
    <name type="ordered locus">Sca_1083</name>
</gene>
<feature type="chain" id="PRO_1000193440" description="Holliday junction resolvase RecU">
    <location>
        <begin position="1"/>
        <end position="208"/>
    </location>
</feature>
<feature type="region of interest" description="Disordered" evidence="2">
    <location>
        <begin position="1"/>
        <end position="25"/>
    </location>
</feature>
<feature type="binding site" evidence="1">
    <location>
        <position position="87"/>
    </location>
    <ligand>
        <name>Mg(2+)</name>
        <dbReference type="ChEBI" id="CHEBI:18420"/>
    </ligand>
</feature>
<feature type="binding site" evidence="1">
    <location>
        <position position="89"/>
    </location>
    <ligand>
        <name>Mg(2+)</name>
        <dbReference type="ChEBI" id="CHEBI:18420"/>
    </ligand>
</feature>
<feature type="binding site" evidence="1">
    <location>
        <position position="102"/>
    </location>
    <ligand>
        <name>Mg(2+)</name>
        <dbReference type="ChEBI" id="CHEBI:18420"/>
    </ligand>
</feature>
<feature type="binding site" evidence="1">
    <location>
        <position position="121"/>
    </location>
    <ligand>
        <name>Mg(2+)</name>
        <dbReference type="ChEBI" id="CHEBI:18420"/>
    </ligand>
</feature>
<feature type="site" description="Transition state stabilizer" evidence="1">
    <location>
        <position position="104"/>
    </location>
</feature>
<name>RECU_STACT</name>
<keyword id="KW-0963">Cytoplasm</keyword>
<keyword id="KW-0227">DNA damage</keyword>
<keyword id="KW-0233">DNA recombination</keyword>
<keyword id="KW-0234">DNA repair</keyword>
<keyword id="KW-0255">Endonuclease</keyword>
<keyword id="KW-0378">Hydrolase</keyword>
<keyword id="KW-0460">Magnesium</keyword>
<keyword id="KW-0479">Metal-binding</keyword>
<keyword id="KW-0540">Nuclease</keyword>
<keyword id="KW-1185">Reference proteome</keyword>
<organism>
    <name type="scientific">Staphylococcus carnosus (strain TM300)</name>
    <dbReference type="NCBI Taxonomy" id="396513"/>
    <lineage>
        <taxon>Bacteria</taxon>
        <taxon>Bacillati</taxon>
        <taxon>Bacillota</taxon>
        <taxon>Bacilli</taxon>
        <taxon>Bacillales</taxon>
        <taxon>Staphylococcaceae</taxon>
        <taxon>Staphylococcus</taxon>
    </lineage>
</organism>
<evidence type="ECO:0000255" key="1">
    <source>
        <dbReference type="HAMAP-Rule" id="MF_00130"/>
    </source>
</evidence>
<evidence type="ECO:0000256" key="2">
    <source>
        <dbReference type="SAM" id="MobiDB-lite"/>
    </source>
</evidence>